<gene>
    <name evidence="1" type="primary">iscR</name>
    <name type="ordered locus">YpsIP31758_1167</name>
</gene>
<reference key="1">
    <citation type="journal article" date="2007" name="PLoS Genet.">
        <title>The complete genome sequence of Yersinia pseudotuberculosis IP31758, the causative agent of Far East scarlet-like fever.</title>
        <authorList>
            <person name="Eppinger M."/>
            <person name="Rosovitz M.J."/>
            <person name="Fricke W.F."/>
            <person name="Rasko D.A."/>
            <person name="Kokorina G."/>
            <person name="Fayolle C."/>
            <person name="Lindler L.E."/>
            <person name="Carniel E."/>
            <person name="Ravel J."/>
        </authorList>
    </citation>
    <scope>NUCLEOTIDE SEQUENCE [LARGE SCALE GENOMIC DNA]</scope>
    <source>
        <strain>IP 31758</strain>
    </source>
</reference>
<accession>A7FFX0</accession>
<name>ISCR_YERP3</name>
<sequence>MRLTSKGRYAVTAMLDVALHSQDGPVPLADISERQGISLSYLEQLFSRLRKNGLVASVRGPGGGYLLGKDASAIAVGAVITAVDESVDATRCQGKEGCQGGNRCLTHTLWRDLSERISSFLNNITLAELVNNQDILEVADRQNNDTRRTANGRPQETINVNLRA</sequence>
<comment type="function">
    <text evidence="1">Regulates the transcription of several operons and genes involved in the biogenesis of Fe-S clusters and Fe-S-containing proteins.</text>
</comment>
<comment type="cofactor">
    <cofactor evidence="1">
        <name>[2Fe-2S] cluster</name>
        <dbReference type="ChEBI" id="CHEBI:190135"/>
    </cofactor>
    <text evidence="1">Binds 1 [2Fe-2S] cluster.</text>
</comment>
<feature type="chain" id="PRO_1000085428" description="HTH-type transcriptional regulator IscR">
    <location>
        <begin position="1"/>
        <end position="164"/>
    </location>
</feature>
<feature type="domain" description="HTH rrf2-type" evidence="1">
    <location>
        <begin position="2"/>
        <end position="131"/>
    </location>
</feature>
<feature type="DNA-binding region" description="H-T-H motif" evidence="1">
    <location>
        <begin position="28"/>
        <end position="51"/>
    </location>
</feature>
<feature type="region of interest" description="Disordered" evidence="2">
    <location>
        <begin position="143"/>
        <end position="164"/>
    </location>
</feature>
<feature type="compositionally biased region" description="Polar residues" evidence="2">
    <location>
        <begin position="152"/>
        <end position="164"/>
    </location>
</feature>
<feature type="binding site" evidence="1">
    <location>
        <position position="92"/>
    </location>
    <ligand>
        <name>[2Fe-2S] cluster</name>
        <dbReference type="ChEBI" id="CHEBI:190135"/>
    </ligand>
</feature>
<feature type="binding site" evidence="1">
    <location>
        <position position="98"/>
    </location>
    <ligand>
        <name>[2Fe-2S] cluster</name>
        <dbReference type="ChEBI" id="CHEBI:190135"/>
    </ligand>
</feature>
<feature type="binding site" evidence="1">
    <location>
        <position position="104"/>
    </location>
    <ligand>
        <name>[2Fe-2S] cluster</name>
        <dbReference type="ChEBI" id="CHEBI:190135"/>
    </ligand>
</feature>
<proteinExistence type="inferred from homology"/>
<protein>
    <recommendedName>
        <fullName evidence="1">HTH-type transcriptional regulator IscR</fullName>
    </recommendedName>
</protein>
<keyword id="KW-0001">2Fe-2S</keyword>
<keyword id="KW-0010">Activator</keyword>
<keyword id="KW-0238">DNA-binding</keyword>
<keyword id="KW-0408">Iron</keyword>
<keyword id="KW-0411">Iron-sulfur</keyword>
<keyword id="KW-0479">Metal-binding</keyword>
<keyword id="KW-0678">Repressor</keyword>
<keyword id="KW-0804">Transcription</keyword>
<keyword id="KW-0805">Transcription regulation</keyword>
<evidence type="ECO:0000255" key="1">
    <source>
        <dbReference type="HAMAP-Rule" id="MF_01176"/>
    </source>
</evidence>
<evidence type="ECO:0000256" key="2">
    <source>
        <dbReference type="SAM" id="MobiDB-lite"/>
    </source>
</evidence>
<dbReference type="EMBL" id="CP000720">
    <property type="protein sequence ID" value="ABS46535.1"/>
    <property type="molecule type" value="Genomic_DNA"/>
</dbReference>
<dbReference type="RefSeq" id="WP_002222202.1">
    <property type="nucleotide sequence ID" value="NC_009708.1"/>
</dbReference>
<dbReference type="SMR" id="A7FFX0"/>
<dbReference type="GeneID" id="96662219"/>
<dbReference type="KEGG" id="ypi:YpsIP31758_1167"/>
<dbReference type="HOGENOM" id="CLU_107144_0_0_6"/>
<dbReference type="Proteomes" id="UP000002412">
    <property type="component" value="Chromosome"/>
</dbReference>
<dbReference type="GO" id="GO:0005829">
    <property type="term" value="C:cytosol"/>
    <property type="evidence" value="ECO:0007669"/>
    <property type="project" value="TreeGrafter"/>
</dbReference>
<dbReference type="GO" id="GO:0051537">
    <property type="term" value="F:2 iron, 2 sulfur cluster binding"/>
    <property type="evidence" value="ECO:0007669"/>
    <property type="project" value="UniProtKB-KW"/>
</dbReference>
<dbReference type="GO" id="GO:0003700">
    <property type="term" value="F:DNA-binding transcription factor activity"/>
    <property type="evidence" value="ECO:0007669"/>
    <property type="project" value="UniProtKB-UniRule"/>
</dbReference>
<dbReference type="GO" id="GO:0003690">
    <property type="term" value="F:double-stranded DNA binding"/>
    <property type="evidence" value="ECO:0007669"/>
    <property type="project" value="UniProtKB-UniRule"/>
</dbReference>
<dbReference type="GO" id="GO:0005506">
    <property type="term" value="F:iron ion binding"/>
    <property type="evidence" value="ECO:0007669"/>
    <property type="project" value="UniProtKB-UniRule"/>
</dbReference>
<dbReference type="FunFam" id="1.10.10.10:FF:000026">
    <property type="entry name" value="HTH-type transcriptional regulator IscR"/>
    <property type="match status" value="1"/>
</dbReference>
<dbReference type="Gene3D" id="1.10.10.10">
    <property type="entry name" value="Winged helix-like DNA-binding domain superfamily/Winged helix DNA-binding domain"/>
    <property type="match status" value="1"/>
</dbReference>
<dbReference type="HAMAP" id="MF_01176">
    <property type="entry name" value="HTH_type_IscR"/>
    <property type="match status" value="1"/>
</dbReference>
<dbReference type="InterPro" id="IPR010242">
    <property type="entry name" value="TF_HTH_IscR"/>
</dbReference>
<dbReference type="InterPro" id="IPR030489">
    <property type="entry name" value="TR_Rrf2-type_CS"/>
</dbReference>
<dbReference type="InterPro" id="IPR000944">
    <property type="entry name" value="Tscrpt_reg_Rrf2"/>
</dbReference>
<dbReference type="InterPro" id="IPR036388">
    <property type="entry name" value="WH-like_DNA-bd_sf"/>
</dbReference>
<dbReference type="InterPro" id="IPR036390">
    <property type="entry name" value="WH_DNA-bd_sf"/>
</dbReference>
<dbReference type="NCBIfam" id="TIGR02010">
    <property type="entry name" value="IscR"/>
    <property type="match status" value="1"/>
</dbReference>
<dbReference type="NCBIfam" id="NF008110">
    <property type="entry name" value="PRK10857.1"/>
    <property type="match status" value="1"/>
</dbReference>
<dbReference type="NCBIfam" id="TIGR00738">
    <property type="entry name" value="rrf2_super"/>
    <property type="match status" value="1"/>
</dbReference>
<dbReference type="PANTHER" id="PTHR33221:SF5">
    <property type="entry name" value="HTH-TYPE TRANSCRIPTIONAL REGULATOR ISCR"/>
    <property type="match status" value="1"/>
</dbReference>
<dbReference type="PANTHER" id="PTHR33221">
    <property type="entry name" value="WINGED HELIX-TURN-HELIX TRANSCRIPTIONAL REGULATOR, RRF2 FAMILY"/>
    <property type="match status" value="1"/>
</dbReference>
<dbReference type="Pfam" id="PF02082">
    <property type="entry name" value="Rrf2"/>
    <property type="match status" value="1"/>
</dbReference>
<dbReference type="SUPFAM" id="SSF46785">
    <property type="entry name" value="Winged helix' DNA-binding domain"/>
    <property type="match status" value="1"/>
</dbReference>
<dbReference type="PROSITE" id="PS01332">
    <property type="entry name" value="HTH_RRF2_1"/>
    <property type="match status" value="1"/>
</dbReference>
<dbReference type="PROSITE" id="PS51197">
    <property type="entry name" value="HTH_RRF2_2"/>
    <property type="match status" value="1"/>
</dbReference>
<organism>
    <name type="scientific">Yersinia pseudotuberculosis serotype O:1b (strain IP 31758)</name>
    <dbReference type="NCBI Taxonomy" id="349747"/>
    <lineage>
        <taxon>Bacteria</taxon>
        <taxon>Pseudomonadati</taxon>
        <taxon>Pseudomonadota</taxon>
        <taxon>Gammaproteobacteria</taxon>
        <taxon>Enterobacterales</taxon>
        <taxon>Yersiniaceae</taxon>
        <taxon>Yersinia</taxon>
    </lineage>
</organism>